<sequence length="211" mass="23222">MKVPEAAISRLITYLRILEELEAQGVHRTSSEQLGELAQVTAFQVRKDLSYFGSYGTRGVGYTVPVLKRELRHILGLNRKWGLCIVGMGRLGSALADYPGFGESFELRGFFDVDPEKVGRPVRGGVIEHVDLLPQRVPGRIEIALLTVPREAAQKAADLLVAAGIKGILNFAPVVLEVPKEVAVENVDFLAGLTRLSFAILNPKWREEMMG</sequence>
<organism>
    <name type="scientific">Thermus thermophilus (strain ATCC 27634 / DSM 579 / HB8)</name>
    <dbReference type="NCBI Taxonomy" id="300852"/>
    <lineage>
        <taxon>Bacteria</taxon>
        <taxon>Thermotogati</taxon>
        <taxon>Deinococcota</taxon>
        <taxon>Deinococci</taxon>
        <taxon>Thermales</taxon>
        <taxon>Thermaceae</taxon>
        <taxon>Thermus</taxon>
    </lineage>
</organism>
<reference key="1">
    <citation type="submission" date="2004-11" db="EMBL/GenBank/DDBJ databases">
        <title>Complete genome sequence of Thermus thermophilus HB8.</title>
        <authorList>
            <person name="Masui R."/>
            <person name="Kurokawa K."/>
            <person name="Nakagawa N."/>
            <person name="Tokunaga F."/>
            <person name="Koyama Y."/>
            <person name="Shibata T."/>
            <person name="Oshima T."/>
            <person name="Yokoyama S."/>
            <person name="Yasunaga T."/>
            <person name="Kuramitsu S."/>
        </authorList>
    </citation>
    <scope>NUCLEOTIDE SEQUENCE [LARGE SCALE GENOMIC DNA]</scope>
    <source>
        <strain>ATCC 27634 / DSM 579 / HB8</strain>
    </source>
</reference>
<proteinExistence type="evidence at protein level"/>
<accession>Q5SHS3</accession>
<keyword id="KW-0002">3D-structure</keyword>
<keyword id="KW-0963">Cytoplasm</keyword>
<keyword id="KW-0238">DNA-binding</keyword>
<keyword id="KW-0520">NAD</keyword>
<keyword id="KW-1185">Reference proteome</keyword>
<keyword id="KW-0678">Repressor</keyword>
<keyword id="KW-0804">Transcription</keyword>
<keyword id="KW-0805">Transcription regulation</keyword>
<comment type="function">
    <text evidence="1">Modulates transcription in response to changes in cellular NADH/NAD(+) redox state.</text>
</comment>
<comment type="subunit">
    <text evidence="1">Homodimer.</text>
</comment>
<comment type="subcellular location">
    <subcellularLocation>
        <location evidence="1">Cytoplasm</location>
    </subcellularLocation>
</comment>
<comment type="similarity">
    <text evidence="1">Belongs to the transcriptional regulatory Rex family.</text>
</comment>
<feature type="chain" id="PRO_1000065429" description="Redox-sensing transcriptional repressor Rex">
    <location>
        <begin position="1"/>
        <end position="211"/>
    </location>
</feature>
<feature type="DNA-binding region" description="H-T-H motif" evidence="1">
    <location>
        <begin position="13"/>
        <end position="52"/>
    </location>
</feature>
<feature type="binding site" evidence="1">
    <location>
        <begin position="87"/>
        <end position="92"/>
    </location>
    <ligand>
        <name>NAD(+)</name>
        <dbReference type="ChEBI" id="CHEBI:57540"/>
    </ligand>
</feature>
<feature type="helix" evidence="2">
    <location>
        <begin position="5"/>
        <end position="23"/>
    </location>
</feature>
<feature type="helix" evidence="2">
    <location>
        <begin position="31"/>
        <end position="38"/>
    </location>
</feature>
<feature type="helix" evidence="2">
    <location>
        <begin position="42"/>
        <end position="51"/>
    </location>
</feature>
<feature type="turn" evidence="2">
    <location>
        <begin position="58"/>
        <end position="60"/>
    </location>
</feature>
<feature type="helix" evidence="2">
    <location>
        <begin position="64"/>
        <end position="74"/>
    </location>
</feature>
<feature type="turn" evidence="2">
    <location>
        <begin position="75"/>
        <end position="78"/>
    </location>
</feature>
<feature type="strand" evidence="2">
    <location>
        <begin position="81"/>
        <end position="86"/>
    </location>
</feature>
<feature type="helix" evidence="2">
    <location>
        <begin position="90"/>
        <end position="97"/>
    </location>
</feature>
<feature type="strand" evidence="2">
    <location>
        <begin position="103"/>
        <end position="113"/>
    </location>
</feature>
<feature type="turn" evidence="2">
    <location>
        <begin position="115"/>
        <end position="119"/>
    </location>
</feature>
<feature type="strand" evidence="2">
    <location>
        <begin position="125"/>
        <end position="129"/>
    </location>
</feature>
<feature type="helix" evidence="2">
    <location>
        <begin position="130"/>
        <end position="132"/>
    </location>
</feature>
<feature type="helix" evidence="2">
    <location>
        <begin position="133"/>
        <end position="136"/>
    </location>
</feature>
<feature type="turn" evidence="2">
    <location>
        <begin position="138"/>
        <end position="140"/>
    </location>
</feature>
<feature type="strand" evidence="2">
    <location>
        <begin position="143"/>
        <end position="146"/>
    </location>
</feature>
<feature type="helix" evidence="2">
    <location>
        <begin position="150"/>
        <end position="163"/>
    </location>
</feature>
<feature type="strand" evidence="2">
    <location>
        <begin position="167"/>
        <end position="170"/>
    </location>
</feature>
<feature type="strand" evidence="2">
    <location>
        <begin position="172"/>
        <end position="174"/>
    </location>
</feature>
<feature type="strand" evidence="2">
    <location>
        <begin position="182"/>
        <end position="186"/>
    </location>
</feature>
<feature type="helix" evidence="2">
    <location>
        <begin position="190"/>
        <end position="201"/>
    </location>
</feature>
<feature type="helix" evidence="2">
    <location>
        <begin position="207"/>
        <end position="210"/>
    </location>
</feature>
<dbReference type="EMBL" id="AP008226">
    <property type="protein sequence ID" value="BAD71480.1"/>
    <property type="molecule type" value="Genomic_DNA"/>
</dbReference>
<dbReference type="RefSeq" id="WP_011173693.1">
    <property type="nucleotide sequence ID" value="NC_006461.1"/>
</dbReference>
<dbReference type="RefSeq" id="YP_144923.1">
    <property type="nucleotide sequence ID" value="NC_006461.1"/>
</dbReference>
<dbReference type="PDB" id="2DT5">
    <property type="method" value="X-ray"/>
    <property type="resolution" value="2.16 A"/>
    <property type="chains" value="A/B=1-211"/>
</dbReference>
<dbReference type="PDBsum" id="2DT5"/>
<dbReference type="SMR" id="Q5SHS3"/>
<dbReference type="EnsemblBacteria" id="BAD71480">
    <property type="protein sequence ID" value="BAD71480"/>
    <property type="gene ID" value="BAD71480"/>
</dbReference>
<dbReference type="GeneID" id="3168513"/>
<dbReference type="KEGG" id="ttj:TTHA1657"/>
<dbReference type="PATRIC" id="fig|300852.9.peg.1627"/>
<dbReference type="eggNOG" id="COG2344">
    <property type="taxonomic scope" value="Bacteria"/>
</dbReference>
<dbReference type="HOGENOM" id="CLU_061534_1_0_0"/>
<dbReference type="PhylomeDB" id="Q5SHS3"/>
<dbReference type="EvolutionaryTrace" id="Q5SHS3"/>
<dbReference type="Proteomes" id="UP000000532">
    <property type="component" value="Chromosome"/>
</dbReference>
<dbReference type="GO" id="GO:0005737">
    <property type="term" value="C:cytoplasm"/>
    <property type="evidence" value="ECO:0007669"/>
    <property type="project" value="UniProtKB-SubCell"/>
</dbReference>
<dbReference type="GO" id="GO:0003677">
    <property type="term" value="F:DNA binding"/>
    <property type="evidence" value="ECO:0007669"/>
    <property type="project" value="UniProtKB-UniRule"/>
</dbReference>
<dbReference type="GO" id="GO:0003700">
    <property type="term" value="F:DNA-binding transcription factor activity"/>
    <property type="evidence" value="ECO:0007669"/>
    <property type="project" value="UniProtKB-UniRule"/>
</dbReference>
<dbReference type="GO" id="GO:0045892">
    <property type="term" value="P:negative regulation of DNA-templated transcription"/>
    <property type="evidence" value="ECO:0007669"/>
    <property type="project" value="InterPro"/>
</dbReference>
<dbReference type="GO" id="GO:0051775">
    <property type="term" value="P:response to redox state"/>
    <property type="evidence" value="ECO:0007669"/>
    <property type="project" value="InterPro"/>
</dbReference>
<dbReference type="Gene3D" id="3.40.50.720">
    <property type="entry name" value="NAD(P)-binding Rossmann-like Domain"/>
    <property type="match status" value="1"/>
</dbReference>
<dbReference type="Gene3D" id="1.10.10.10">
    <property type="entry name" value="Winged helix-like DNA-binding domain superfamily/Winged helix DNA-binding domain"/>
    <property type="match status" value="1"/>
</dbReference>
<dbReference type="HAMAP" id="MF_01131">
    <property type="entry name" value="Rex"/>
    <property type="match status" value="1"/>
</dbReference>
<dbReference type="InterPro" id="IPR003781">
    <property type="entry name" value="CoA-bd"/>
</dbReference>
<dbReference type="InterPro" id="IPR036291">
    <property type="entry name" value="NAD(P)-bd_dom_sf"/>
</dbReference>
<dbReference type="InterPro" id="IPR009718">
    <property type="entry name" value="Rex_DNA-bd_C_dom"/>
</dbReference>
<dbReference type="InterPro" id="IPR022876">
    <property type="entry name" value="Tscrpt_rep_Rex"/>
</dbReference>
<dbReference type="InterPro" id="IPR036388">
    <property type="entry name" value="WH-like_DNA-bd_sf"/>
</dbReference>
<dbReference type="InterPro" id="IPR036390">
    <property type="entry name" value="WH_DNA-bd_sf"/>
</dbReference>
<dbReference type="NCBIfam" id="NF003992">
    <property type="entry name" value="PRK05472.2-1"/>
    <property type="match status" value="1"/>
</dbReference>
<dbReference type="NCBIfam" id="NF003993">
    <property type="entry name" value="PRK05472.2-2"/>
    <property type="match status" value="1"/>
</dbReference>
<dbReference type="NCBIfam" id="NF003994">
    <property type="entry name" value="PRK05472.2-3"/>
    <property type="match status" value="1"/>
</dbReference>
<dbReference type="NCBIfam" id="NF003995">
    <property type="entry name" value="PRK05472.2-4"/>
    <property type="match status" value="1"/>
</dbReference>
<dbReference type="NCBIfam" id="NF003996">
    <property type="entry name" value="PRK05472.2-5"/>
    <property type="match status" value="1"/>
</dbReference>
<dbReference type="PANTHER" id="PTHR35786">
    <property type="entry name" value="REDOX-SENSING TRANSCRIPTIONAL REPRESSOR REX"/>
    <property type="match status" value="1"/>
</dbReference>
<dbReference type="PANTHER" id="PTHR35786:SF1">
    <property type="entry name" value="REDOX-SENSING TRANSCRIPTIONAL REPRESSOR REX 1"/>
    <property type="match status" value="1"/>
</dbReference>
<dbReference type="Pfam" id="PF02629">
    <property type="entry name" value="CoA_binding"/>
    <property type="match status" value="1"/>
</dbReference>
<dbReference type="Pfam" id="PF06971">
    <property type="entry name" value="Put_DNA-bind_N"/>
    <property type="match status" value="1"/>
</dbReference>
<dbReference type="SMART" id="SM00881">
    <property type="entry name" value="CoA_binding"/>
    <property type="match status" value="1"/>
</dbReference>
<dbReference type="SUPFAM" id="SSF51735">
    <property type="entry name" value="NAD(P)-binding Rossmann-fold domains"/>
    <property type="match status" value="1"/>
</dbReference>
<dbReference type="SUPFAM" id="SSF46785">
    <property type="entry name" value="Winged helix' DNA-binding domain"/>
    <property type="match status" value="1"/>
</dbReference>
<protein>
    <recommendedName>
        <fullName evidence="1">Redox-sensing transcriptional repressor Rex</fullName>
    </recommendedName>
</protein>
<name>REX_THET8</name>
<evidence type="ECO:0000255" key="1">
    <source>
        <dbReference type="HAMAP-Rule" id="MF_01131"/>
    </source>
</evidence>
<evidence type="ECO:0007829" key="2">
    <source>
        <dbReference type="PDB" id="2DT5"/>
    </source>
</evidence>
<gene>
    <name evidence="1" type="primary">rex</name>
    <name type="ordered locus">TTHA1657</name>
</gene>